<comment type="subcellular location">
    <subcellularLocation>
        <location>Plastid</location>
        <location>Chloroplast</location>
    </subcellularLocation>
</comment>
<comment type="similarity">
    <text evidence="1">To group II intron maturases.</text>
</comment>
<accession>P31921</accession>
<feature type="chain" id="PRO_0000217436" description="Uncharacterized 59.8 kDa protein in psbD intron 8">
    <location>
        <begin position="1"/>
        <end position="506"/>
    </location>
</feature>
<keyword id="KW-0150">Chloroplast</keyword>
<keyword id="KW-0934">Plastid</keyword>
<geneLocation type="chloroplast"/>
<dbReference type="EMBL" id="Z11874">
    <property type="status" value="NOT_ANNOTATED_CDS"/>
    <property type="molecule type" value="Genomic_DNA"/>
</dbReference>
<dbReference type="EMBL" id="X70810">
    <property type="protein sequence ID" value="CAA50078.1"/>
    <property type="molecule type" value="Genomic_DNA"/>
</dbReference>
<dbReference type="PIR" id="S34497">
    <property type="entry name" value="S34497"/>
</dbReference>
<dbReference type="RefSeq" id="NP_041891.1">
    <property type="nucleotide sequence ID" value="NC_001603.2"/>
</dbReference>
<dbReference type="SMR" id="P31921"/>
<dbReference type="GeneID" id="7564688"/>
<dbReference type="GO" id="GO:0009507">
    <property type="term" value="C:chloroplast"/>
    <property type="evidence" value="ECO:0007669"/>
    <property type="project" value="UniProtKB-SubCell"/>
</dbReference>
<organism>
    <name type="scientific">Euglena gracilis</name>
    <dbReference type="NCBI Taxonomy" id="3039"/>
    <lineage>
        <taxon>Eukaryota</taxon>
        <taxon>Discoba</taxon>
        <taxon>Euglenozoa</taxon>
        <taxon>Euglenida</taxon>
        <taxon>Spirocuta</taxon>
        <taxon>Euglenophyceae</taxon>
        <taxon>Euglenales</taxon>
        <taxon>Euglenaceae</taxon>
        <taxon>Euglena</taxon>
    </lineage>
</organism>
<evidence type="ECO:0000305" key="1"/>
<reference key="1">
    <citation type="journal article" date="1993" name="Nucleic Acids Res.">
        <title>Complete sequence of Euglena gracilis chloroplast DNA.</title>
        <authorList>
            <person name="Hallick R.B."/>
            <person name="Hong L."/>
            <person name="Drager R.G."/>
            <person name="Favreau M.R."/>
            <person name="Monfort A."/>
            <person name="Orsat B."/>
            <person name="Spielmann A."/>
            <person name="Stutz E."/>
        </authorList>
    </citation>
    <scope>NUCLEOTIDE SEQUENCE [LARGE SCALE GENOMIC DNA]</scope>
    <source>
        <strain>Z / UTEX 753</strain>
    </source>
</reference>
<proteinExistence type="predicted"/>
<name>YCX2_EUGGR</name>
<sequence>MLIKVNFMEHYLLNKQFELASAIKSRNKILIHKLVSDVLVSYNSLCYAVYKTLKNSDDKSSSNIQKKKKKKKNFQNLVDSLKCFVLNYDFYKIRCLNLYYLRNFIDCKDQFLHFHFLDIALQNLYSFIFFPFLESNLDKFTYGPRVFRSSIDAVKVLFLLGKQKKYSNYNKYLFCFAFNYTIVKCFDAVFNSWVLSNVSFIDKSILSFWVKNGFDNFYSGDQFFFQKKNFEINRGTSLIFLVIFNFVFMGMQFFLESSILSKFGFFSKFVLITDLNSVVILSSDLKTAKIVKSSLLIFFHSRGICQNFRDNSIVDFFCKNCENKNFVFCGITFHYKLIHGEYKFVLSPILEKIKNVKKKVLNLCKKFSKPLVLFDNIKPLMKSWFNSYKIIKNNYSFLKLSYWIVGKITKSIYLLYVNSNFERGKFGIRKGRRSGRLYKNIAAQVVKRLYFLKDQQRFFINTIEGKIIFKGFSVGLSKKNSIELKNFFSNSLKGKKFFATFGKNFF</sequence>
<protein>
    <recommendedName>
        <fullName>Uncharacterized 59.8 kDa protein in psbD intron 8</fullName>
    </recommendedName>
    <alternativeName>
        <fullName>ORF506</fullName>
    </alternativeName>
</protein>